<name>SYE_PROMH</name>
<gene>
    <name evidence="1" type="primary">gltX</name>
    <name type="ordered locus">PMI1818</name>
</gene>
<sequence length="472" mass="53805">MSKIKTRFAPSPTGYLHVGGARTALYSWLFSRHNKGEFVLRIEDTDLERSTQPAIDAIMDGMNWLNLNWDEGPYYQTKRFDRYNQVIDQMLAAGTAYRCYCSKERLEKLREDQMAKGEKPRYDGCCRHGDHNHTPDEPHVVRFLNPQEGSVIFNDKIRGPIEFSNQELDDLIIRRTDGSPTYNFCVVIDDWDMEITHVIRGEDHINNTPRQINILKALGAPVPEYAHVSMILGDDGKKLSKRYNAVSVMQYRDDGYLPEALLNYLVRLGWSHGDQEIFSIDEMIKDFTLEAISKSASAFNTDKLLWLNHHYINTLPAEQVAVHLDWHIKQQNIDTSNGPSLVELIKLLGERCKTLKEMAESCHYFYVDFDSFEETAAKKHLRPVARQPLEVVRDKLSAITDWTAENVHKAIQETAEELEVGMGKVGMPLRVAVTGAGQSPALDVTVHAIGKARSIARINKALDFITDRENQA</sequence>
<evidence type="ECO:0000255" key="1">
    <source>
        <dbReference type="HAMAP-Rule" id="MF_00022"/>
    </source>
</evidence>
<organism>
    <name type="scientific">Proteus mirabilis (strain HI4320)</name>
    <dbReference type="NCBI Taxonomy" id="529507"/>
    <lineage>
        <taxon>Bacteria</taxon>
        <taxon>Pseudomonadati</taxon>
        <taxon>Pseudomonadota</taxon>
        <taxon>Gammaproteobacteria</taxon>
        <taxon>Enterobacterales</taxon>
        <taxon>Morganellaceae</taxon>
        <taxon>Proteus</taxon>
    </lineage>
</organism>
<proteinExistence type="inferred from homology"/>
<reference key="1">
    <citation type="journal article" date="2008" name="J. Bacteriol.">
        <title>Complete genome sequence of uropathogenic Proteus mirabilis, a master of both adherence and motility.</title>
        <authorList>
            <person name="Pearson M.M."/>
            <person name="Sebaihia M."/>
            <person name="Churcher C."/>
            <person name="Quail M.A."/>
            <person name="Seshasayee A.S."/>
            <person name="Luscombe N.M."/>
            <person name="Abdellah Z."/>
            <person name="Arrosmith C."/>
            <person name="Atkin B."/>
            <person name="Chillingworth T."/>
            <person name="Hauser H."/>
            <person name="Jagels K."/>
            <person name="Moule S."/>
            <person name="Mungall K."/>
            <person name="Norbertczak H."/>
            <person name="Rabbinowitsch E."/>
            <person name="Walker D."/>
            <person name="Whithead S."/>
            <person name="Thomson N.R."/>
            <person name="Rather P.N."/>
            <person name="Parkhill J."/>
            <person name="Mobley H.L.T."/>
        </authorList>
    </citation>
    <scope>NUCLEOTIDE SEQUENCE [LARGE SCALE GENOMIC DNA]</scope>
    <source>
        <strain>HI4320</strain>
    </source>
</reference>
<keyword id="KW-0030">Aminoacyl-tRNA synthetase</keyword>
<keyword id="KW-0067">ATP-binding</keyword>
<keyword id="KW-0963">Cytoplasm</keyword>
<keyword id="KW-0436">Ligase</keyword>
<keyword id="KW-0479">Metal-binding</keyword>
<keyword id="KW-0547">Nucleotide-binding</keyword>
<keyword id="KW-0648">Protein biosynthesis</keyword>
<keyword id="KW-1185">Reference proteome</keyword>
<keyword id="KW-0862">Zinc</keyword>
<accession>B4EZQ7</accession>
<dbReference type="EC" id="6.1.1.17" evidence="1"/>
<dbReference type="EMBL" id="AM942759">
    <property type="protein sequence ID" value="CAR43779.1"/>
    <property type="molecule type" value="Genomic_DNA"/>
</dbReference>
<dbReference type="RefSeq" id="WP_012368116.1">
    <property type="nucleotide sequence ID" value="NC_010554.1"/>
</dbReference>
<dbReference type="SMR" id="B4EZQ7"/>
<dbReference type="EnsemblBacteria" id="CAR43779">
    <property type="protein sequence ID" value="CAR43779"/>
    <property type="gene ID" value="PMI1818"/>
</dbReference>
<dbReference type="GeneID" id="6802956"/>
<dbReference type="KEGG" id="pmr:PMI1818"/>
<dbReference type="PATRIC" id="fig|529507.6.peg.1769"/>
<dbReference type="eggNOG" id="COG0008">
    <property type="taxonomic scope" value="Bacteria"/>
</dbReference>
<dbReference type="HOGENOM" id="CLU_015768_6_0_6"/>
<dbReference type="Proteomes" id="UP000008319">
    <property type="component" value="Chromosome"/>
</dbReference>
<dbReference type="GO" id="GO:0005829">
    <property type="term" value="C:cytosol"/>
    <property type="evidence" value="ECO:0007669"/>
    <property type="project" value="TreeGrafter"/>
</dbReference>
<dbReference type="GO" id="GO:0005524">
    <property type="term" value="F:ATP binding"/>
    <property type="evidence" value="ECO:0007669"/>
    <property type="project" value="UniProtKB-UniRule"/>
</dbReference>
<dbReference type="GO" id="GO:0004818">
    <property type="term" value="F:glutamate-tRNA ligase activity"/>
    <property type="evidence" value="ECO:0007669"/>
    <property type="project" value="UniProtKB-UniRule"/>
</dbReference>
<dbReference type="GO" id="GO:0000049">
    <property type="term" value="F:tRNA binding"/>
    <property type="evidence" value="ECO:0007669"/>
    <property type="project" value="InterPro"/>
</dbReference>
<dbReference type="GO" id="GO:0008270">
    <property type="term" value="F:zinc ion binding"/>
    <property type="evidence" value="ECO:0007669"/>
    <property type="project" value="InterPro"/>
</dbReference>
<dbReference type="GO" id="GO:0006424">
    <property type="term" value="P:glutamyl-tRNA aminoacylation"/>
    <property type="evidence" value="ECO:0007669"/>
    <property type="project" value="UniProtKB-UniRule"/>
</dbReference>
<dbReference type="CDD" id="cd00808">
    <property type="entry name" value="GluRS_core"/>
    <property type="match status" value="1"/>
</dbReference>
<dbReference type="FunFam" id="1.10.10.350:FF:000001">
    <property type="entry name" value="Glutamate--tRNA ligase"/>
    <property type="match status" value="1"/>
</dbReference>
<dbReference type="FunFam" id="3.40.50.620:FF:000007">
    <property type="entry name" value="Glutamate--tRNA ligase"/>
    <property type="match status" value="1"/>
</dbReference>
<dbReference type="Gene3D" id="1.10.10.350">
    <property type="match status" value="1"/>
</dbReference>
<dbReference type="Gene3D" id="3.40.50.620">
    <property type="entry name" value="HUPs"/>
    <property type="match status" value="1"/>
</dbReference>
<dbReference type="HAMAP" id="MF_00022">
    <property type="entry name" value="Glu_tRNA_synth_type1"/>
    <property type="match status" value="1"/>
</dbReference>
<dbReference type="InterPro" id="IPR045462">
    <property type="entry name" value="aa-tRNA-synth_I_cd-bd"/>
</dbReference>
<dbReference type="InterPro" id="IPR020751">
    <property type="entry name" value="aa-tRNA-synth_I_codon-bd_sub2"/>
</dbReference>
<dbReference type="InterPro" id="IPR001412">
    <property type="entry name" value="aa-tRNA-synth_I_CS"/>
</dbReference>
<dbReference type="InterPro" id="IPR008925">
    <property type="entry name" value="aa_tRNA-synth_I_cd-bd_sf"/>
</dbReference>
<dbReference type="InterPro" id="IPR004527">
    <property type="entry name" value="Glu-tRNA-ligase_bac/mito"/>
</dbReference>
<dbReference type="InterPro" id="IPR000924">
    <property type="entry name" value="Glu/Gln-tRNA-synth"/>
</dbReference>
<dbReference type="InterPro" id="IPR020058">
    <property type="entry name" value="Glu/Gln-tRNA-synth_Ib_cat-dom"/>
</dbReference>
<dbReference type="InterPro" id="IPR049940">
    <property type="entry name" value="GluQ/Sye"/>
</dbReference>
<dbReference type="InterPro" id="IPR033910">
    <property type="entry name" value="GluRS_core"/>
</dbReference>
<dbReference type="InterPro" id="IPR014729">
    <property type="entry name" value="Rossmann-like_a/b/a_fold"/>
</dbReference>
<dbReference type="NCBIfam" id="TIGR00464">
    <property type="entry name" value="gltX_bact"/>
    <property type="match status" value="1"/>
</dbReference>
<dbReference type="PANTHER" id="PTHR43311">
    <property type="entry name" value="GLUTAMATE--TRNA LIGASE"/>
    <property type="match status" value="1"/>
</dbReference>
<dbReference type="PANTHER" id="PTHR43311:SF2">
    <property type="entry name" value="GLUTAMATE--TRNA LIGASE, MITOCHONDRIAL-RELATED"/>
    <property type="match status" value="1"/>
</dbReference>
<dbReference type="Pfam" id="PF19269">
    <property type="entry name" value="Anticodon_2"/>
    <property type="match status" value="1"/>
</dbReference>
<dbReference type="Pfam" id="PF00749">
    <property type="entry name" value="tRNA-synt_1c"/>
    <property type="match status" value="1"/>
</dbReference>
<dbReference type="PRINTS" id="PR00987">
    <property type="entry name" value="TRNASYNTHGLU"/>
</dbReference>
<dbReference type="SUPFAM" id="SSF48163">
    <property type="entry name" value="An anticodon-binding domain of class I aminoacyl-tRNA synthetases"/>
    <property type="match status" value="1"/>
</dbReference>
<dbReference type="SUPFAM" id="SSF52374">
    <property type="entry name" value="Nucleotidylyl transferase"/>
    <property type="match status" value="1"/>
</dbReference>
<dbReference type="PROSITE" id="PS00178">
    <property type="entry name" value="AA_TRNA_LIGASE_I"/>
    <property type="match status" value="1"/>
</dbReference>
<protein>
    <recommendedName>
        <fullName evidence="1">Glutamate--tRNA ligase</fullName>
        <ecNumber evidence="1">6.1.1.17</ecNumber>
    </recommendedName>
    <alternativeName>
        <fullName evidence="1">Glutamyl-tRNA synthetase</fullName>
        <shortName evidence="1">GluRS</shortName>
    </alternativeName>
</protein>
<feature type="chain" id="PRO_1000090097" description="Glutamate--tRNA ligase">
    <location>
        <begin position="1"/>
        <end position="472"/>
    </location>
</feature>
<feature type="short sequence motif" description="'HIGH' region" evidence="1">
    <location>
        <begin position="10"/>
        <end position="20"/>
    </location>
</feature>
<feature type="short sequence motif" description="'KMSKS' region" evidence="1">
    <location>
        <begin position="238"/>
        <end position="242"/>
    </location>
</feature>
<feature type="binding site" evidence="1">
    <location>
        <position position="99"/>
    </location>
    <ligand>
        <name>Zn(2+)</name>
        <dbReference type="ChEBI" id="CHEBI:29105"/>
    </ligand>
</feature>
<feature type="binding site" evidence="1">
    <location>
        <position position="101"/>
    </location>
    <ligand>
        <name>Zn(2+)</name>
        <dbReference type="ChEBI" id="CHEBI:29105"/>
    </ligand>
</feature>
<feature type="binding site" evidence="1">
    <location>
        <position position="126"/>
    </location>
    <ligand>
        <name>Zn(2+)</name>
        <dbReference type="ChEBI" id="CHEBI:29105"/>
    </ligand>
</feature>
<feature type="binding site" evidence="1">
    <location>
        <position position="128"/>
    </location>
    <ligand>
        <name>Zn(2+)</name>
        <dbReference type="ChEBI" id="CHEBI:29105"/>
    </ligand>
</feature>
<feature type="binding site" evidence="1">
    <location>
        <position position="241"/>
    </location>
    <ligand>
        <name>ATP</name>
        <dbReference type="ChEBI" id="CHEBI:30616"/>
    </ligand>
</feature>
<comment type="function">
    <text evidence="1">Catalyzes the attachment of glutamate to tRNA(Glu) in a two-step reaction: glutamate is first activated by ATP to form Glu-AMP and then transferred to the acceptor end of tRNA(Glu).</text>
</comment>
<comment type="catalytic activity">
    <reaction evidence="1">
        <text>tRNA(Glu) + L-glutamate + ATP = L-glutamyl-tRNA(Glu) + AMP + diphosphate</text>
        <dbReference type="Rhea" id="RHEA:23540"/>
        <dbReference type="Rhea" id="RHEA-COMP:9663"/>
        <dbReference type="Rhea" id="RHEA-COMP:9680"/>
        <dbReference type="ChEBI" id="CHEBI:29985"/>
        <dbReference type="ChEBI" id="CHEBI:30616"/>
        <dbReference type="ChEBI" id="CHEBI:33019"/>
        <dbReference type="ChEBI" id="CHEBI:78442"/>
        <dbReference type="ChEBI" id="CHEBI:78520"/>
        <dbReference type="ChEBI" id="CHEBI:456215"/>
        <dbReference type="EC" id="6.1.1.17"/>
    </reaction>
</comment>
<comment type="cofactor">
    <cofactor evidence="1">
        <name>Zn(2+)</name>
        <dbReference type="ChEBI" id="CHEBI:29105"/>
    </cofactor>
    <text evidence="1">Binds 1 zinc ion per subunit.</text>
</comment>
<comment type="subunit">
    <text evidence="1">Monomer.</text>
</comment>
<comment type="subcellular location">
    <subcellularLocation>
        <location evidence="1">Cytoplasm</location>
    </subcellularLocation>
</comment>
<comment type="similarity">
    <text evidence="1">Belongs to the class-I aminoacyl-tRNA synthetase family. Glutamate--tRNA ligase type 1 subfamily.</text>
</comment>